<protein>
    <recommendedName>
        <fullName evidence="1">DnaA initiator-associating protein DiaA</fullName>
    </recommendedName>
</protein>
<comment type="function">
    <text evidence="1">Required for the timely initiation of chromosomal replication via direct interactions with the DnaA initiator protein.</text>
</comment>
<comment type="subunit">
    <text evidence="1">Homotetramer; dimer of dimers.</text>
</comment>
<comment type="similarity">
    <text evidence="1">Belongs to the SIS family. DiaA subfamily.</text>
</comment>
<sequence>MLERIKVCFTESIQTQIAAAEALPDAISRAAMTLVHSLLNGNKILCCGNGTSAANAQHFAASMINRFETERPSLPAIALNTDNVVLTAIANDRLHDEVYAKQVRALGHAGDVLLAISTRGNSRDIVKAVEAAVTRDMTIVALTGYDGGELAGLLGPQDVEIRIPSHHSARIQEMHMLTVNCLCDLIDNTLFPHQDD</sequence>
<feature type="chain" id="PRO_1000137797" description="DnaA initiator-associating protein DiaA">
    <location>
        <begin position="1"/>
        <end position="196"/>
    </location>
</feature>
<feature type="domain" description="SIS" evidence="1">
    <location>
        <begin position="34"/>
        <end position="196"/>
    </location>
</feature>
<reference key="1">
    <citation type="journal article" date="2008" name="Genome Res.">
        <title>Comparative genome analysis of Salmonella enteritidis PT4 and Salmonella gallinarum 287/91 provides insights into evolutionary and host adaptation pathways.</title>
        <authorList>
            <person name="Thomson N.R."/>
            <person name="Clayton D.J."/>
            <person name="Windhorst D."/>
            <person name="Vernikos G."/>
            <person name="Davidson S."/>
            <person name="Churcher C."/>
            <person name="Quail M.A."/>
            <person name="Stevens M."/>
            <person name="Jones M.A."/>
            <person name="Watson M."/>
            <person name="Barron A."/>
            <person name="Layton A."/>
            <person name="Pickard D."/>
            <person name="Kingsley R.A."/>
            <person name="Bignell A."/>
            <person name="Clark L."/>
            <person name="Harris B."/>
            <person name="Ormond D."/>
            <person name="Abdellah Z."/>
            <person name="Brooks K."/>
            <person name="Cherevach I."/>
            <person name="Chillingworth T."/>
            <person name="Woodward J."/>
            <person name="Norberczak H."/>
            <person name="Lord A."/>
            <person name="Arrowsmith C."/>
            <person name="Jagels K."/>
            <person name="Moule S."/>
            <person name="Mungall K."/>
            <person name="Saunders M."/>
            <person name="Whitehead S."/>
            <person name="Chabalgoity J.A."/>
            <person name="Maskell D."/>
            <person name="Humphreys T."/>
            <person name="Roberts M."/>
            <person name="Barrow P.A."/>
            <person name="Dougan G."/>
            <person name="Parkhill J."/>
        </authorList>
    </citation>
    <scope>NUCLEOTIDE SEQUENCE [LARGE SCALE GENOMIC DNA]</scope>
    <source>
        <strain>P125109</strain>
    </source>
</reference>
<gene>
    <name evidence="1" type="primary">diaA</name>
    <name type="ordered locus">SEN3101</name>
</gene>
<name>DIAA_SALEP</name>
<accession>B5QZT8</accession>
<evidence type="ECO:0000255" key="1">
    <source>
        <dbReference type="HAMAP-Rule" id="MF_01157"/>
    </source>
</evidence>
<keyword id="KW-0235">DNA replication</keyword>
<dbReference type="EMBL" id="AM933172">
    <property type="protein sequence ID" value="CAR34677.1"/>
    <property type="molecule type" value="Genomic_DNA"/>
</dbReference>
<dbReference type="RefSeq" id="WP_000893481.1">
    <property type="nucleotide sequence ID" value="NC_011294.1"/>
</dbReference>
<dbReference type="SMR" id="B5QZT8"/>
<dbReference type="GeneID" id="66757607"/>
<dbReference type="KEGG" id="set:SEN3101"/>
<dbReference type="HOGENOM" id="CLU_080999_3_1_6"/>
<dbReference type="Proteomes" id="UP000000613">
    <property type="component" value="Chromosome"/>
</dbReference>
<dbReference type="GO" id="GO:0097367">
    <property type="term" value="F:carbohydrate derivative binding"/>
    <property type="evidence" value="ECO:0007669"/>
    <property type="project" value="InterPro"/>
</dbReference>
<dbReference type="GO" id="GO:1901135">
    <property type="term" value="P:carbohydrate derivative metabolic process"/>
    <property type="evidence" value="ECO:0007669"/>
    <property type="project" value="InterPro"/>
</dbReference>
<dbReference type="GO" id="GO:0006260">
    <property type="term" value="P:DNA replication"/>
    <property type="evidence" value="ECO:0007669"/>
    <property type="project" value="UniProtKB-UniRule"/>
</dbReference>
<dbReference type="CDD" id="cd05006">
    <property type="entry name" value="SIS_GmhA"/>
    <property type="match status" value="1"/>
</dbReference>
<dbReference type="FunFam" id="3.40.50.10490:FF:000006">
    <property type="entry name" value="DnaA initiator-associating protein DiaA"/>
    <property type="match status" value="1"/>
</dbReference>
<dbReference type="Gene3D" id="3.40.50.10490">
    <property type="entry name" value="Glucose-6-phosphate isomerase like protein, domain 1"/>
    <property type="match status" value="1"/>
</dbReference>
<dbReference type="HAMAP" id="MF_01157">
    <property type="entry name" value="SIS_DiaA"/>
    <property type="match status" value="1"/>
</dbReference>
<dbReference type="InterPro" id="IPR023070">
    <property type="entry name" value="DiaA"/>
</dbReference>
<dbReference type="InterPro" id="IPR035461">
    <property type="entry name" value="GmhA/DiaA"/>
</dbReference>
<dbReference type="InterPro" id="IPR001347">
    <property type="entry name" value="SIS_dom"/>
</dbReference>
<dbReference type="InterPro" id="IPR046348">
    <property type="entry name" value="SIS_dom_sf"/>
</dbReference>
<dbReference type="InterPro" id="IPR050099">
    <property type="entry name" value="SIS_GmhA/DiaA_subfam"/>
</dbReference>
<dbReference type="NCBIfam" id="NF008138">
    <property type="entry name" value="PRK10886.1"/>
    <property type="match status" value="1"/>
</dbReference>
<dbReference type="PANTHER" id="PTHR30390:SF6">
    <property type="entry name" value="DNAA INITIATOR-ASSOCIATING PROTEIN DIAA"/>
    <property type="match status" value="1"/>
</dbReference>
<dbReference type="PANTHER" id="PTHR30390">
    <property type="entry name" value="SEDOHEPTULOSE 7-PHOSPHATE ISOMERASE / DNAA INITIATOR-ASSOCIATING FACTOR FOR REPLICATION INITIATION"/>
    <property type="match status" value="1"/>
</dbReference>
<dbReference type="Pfam" id="PF13580">
    <property type="entry name" value="SIS_2"/>
    <property type="match status" value="1"/>
</dbReference>
<dbReference type="SUPFAM" id="SSF53697">
    <property type="entry name" value="SIS domain"/>
    <property type="match status" value="1"/>
</dbReference>
<dbReference type="PROSITE" id="PS51464">
    <property type="entry name" value="SIS"/>
    <property type="match status" value="1"/>
</dbReference>
<organism>
    <name type="scientific">Salmonella enteritidis PT4 (strain P125109)</name>
    <dbReference type="NCBI Taxonomy" id="550537"/>
    <lineage>
        <taxon>Bacteria</taxon>
        <taxon>Pseudomonadati</taxon>
        <taxon>Pseudomonadota</taxon>
        <taxon>Gammaproteobacteria</taxon>
        <taxon>Enterobacterales</taxon>
        <taxon>Enterobacteriaceae</taxon>
        <taxon>Salmonella</taxon>
    </lineage>
</organism>
<proteinExistence type="inferred from homology"/>